<organism>
    <name type="scientific">Bifidobacterium longum (strain NCC 2705)</name>
    <dbReference type="NCBI Taxonomy" id="206672"/>
    <lineage>
        <taxon>Bacteria</taxon>
        <taxon>Bacillati</taxon>
        <taxon>Actinomycetota</taxon>
        <taxon>Actinomycetes</taxon>
        <taxon>Bifidobacteriales</taxon>
        <taxon>Bifidobacteriaceae</taxon>
        <taxon>Bifidobacterium</taxon>
    </lineage>
</organism>
<protein>
    <recommendedName>
        <fullName evidence="1">Glutamyl-tRNA(Gln) amidotransferase subunit A</fullName>
        <shortName evidence="1">Glu-ADT subunit A</shortName>
        <ecNumber evidence="1">6.3.5.7</ecNumber>
    </recommendedName>
</protein>
<evidence type="ECO:0000255" key="1">
    <source>
        <dbReference type="HAMAP-Rule" id="MF_00120"/>
    </source>
</evidence>
<feature type="chain" id="PRO_0000105139" description="Glutamyl-tRNA(Gln) amidotransferase subunit A">
    <location>
        <begin position="1"/>
        <end position="513"/>
    </location>
</feature>
<feature type="active site" description="Charge relay system" evidence="1">
    <location>
        <position position="85"/>
    </location>
</feature>
<feature type="active site" description="Charge relay system" evidence="1">
    <location>
        <position position="160"/>
    </location>
</feature>
<feature type="active site" description="Acyl-ester intermediate" evidence="1">
    <location>
        <position position="184"/>
    </location>
</feature>
<comment type="function">
    <text evidence="1">Allows the formation of correctly charged Gln-tRNA(Gln) through the transamidation of misacylated Glu-tRNA(Gln) in organisms which lack glutaminyl-tRNA synthetase. The reaction takes place in the presence of glutamine and ATP through an activated gamma-phospho-Glu-tRNA(Gln).</text>
</comment>
<comment type="catalytic activity">
    <reaction evidence="1">
        <text>L-glutamyl-tRNA(Gln) + L-glutamine + ATP + H2O = L-glutaminyl-tRNA(Gln) + L-glutamate + ADP + phosphate + H(+)</text>
        <dbReference type="Rhea" id="RHEA:17521"/>
        <dbReference type="Rhea" id="RHEA-COMP:9681"/>
        <dbReference type="Rhea" id="RHEA-COMP:9684"/>
        <dbReference type="ChEBI" id="CHEBI:15377"/>
        <dbReference type="ChEBI" id="CHEBI:15378"/>
        <dbReference type="ChEBI" id="CHEBI:29985"/>
        <dbReference type="ChEBI" id="CHEBI:30616"/>
        <dbReference type="ChEBI" id="CHEBI:43474"/>
        <dbReference type="ChEBI" id="CHEBI:58359"/>
        <dbReference type="ChEBI" id="CHEBI:78520"/>
        <dbReference type="ChEBI" id="CHEBI:78521"/>
        <dbReference type="ChEBI" id="CHEBI:456216"/>
        <dbReference type="EC" id="6.3.5.7"/>
    </reaction>
</comment>
<comment type="subunit">
    <text evidence="1">Heterotrimer of A, B and C subunits.</text>
</comment>
<comment type="similarity">
    <text evidence="1">Belongs to the amidase family. GatA subfamily.</text>
</comment>
<name>GATA_BIFLO</name>
<accession>Q8G768</accession>
<reference key="1">
    <citation type="journal article" date="2002" name="Proc. Natl. Acad. Sci. U.S.A.">
        <title>The genome sequence of Bifidobacterium longum reflects its adaptation to the human gastrointestinal tract.</title>
        <authorList>
            <person name="Schell M.A."/>
            <person name="Karmirantzou M."/>
            <person name="Snel B."/>
            <person name="Vilanova D."/>
            <person name="Berger B."/>
            <person name="Pessi G."/>
            <person name="Zwahlen M.-C."/>
            <person name="Desiere F."/>
            <person name="Bork P."/>
            <person name="Delley M."/>
            <person name="Pridmore R.D."/>
            <person name="Arigoni F."/>
        </authorList>
    </citation>
    <scope>NUCLEOTIDE SEQUENCE [LARGE SCALE GENOMIC DNA]</scope>
    <source>
        <strain>NCC 2705</strain>
    </source>
</reference>
<dbReference type="EC" id="6.3.5.7" evidence="1"/>
<dbReference type="EMBL" id="AE014295">
    <property type="protein sequence ID" value="AAN24240.1"/>
    <property type="molecule type" value="Genomic_DNA"/>
</dbReference>
<dbReference type="RefSeq" id="NP_695604.1">
    <property type="nucleotide sequence ID" value="NC_004307.2"/>
</dbReference>
<dbReference type="RefSeq" id="WP_007054751.1">
    <property type="nucleotide sequence ID" value="NC_004307.2"/>
</dbReference>
<dbReference type="SMR" id="Q8G768"/>
<dbReference type="STRING" id="206672.BL0403"/>
<dbReference type="EnsemblBacteria" id="AAN24240">
    <property type="protein sequence ID" value="AAN24240"/>
    <property type="gene ID" value="BL0403"/>
</dbReference>
<dbReference type="GeneID" id="69577473"/>
<dbReference type="KEGG" id="blo:BL0403"/>
<dbReference type="PATRIC" id="fig|206672.9.peg.1148"/>
<dbReference type="HOGENOM" id="CLU_009600_0_3_11"/>
<dbReference type="OrthoDB" id="9811471at2"/>
<dbReference type="PhylomeDB" id="Q8G768"/>
<dbReference type="Proteomes" id="UP000000439">
    <property type="component" value="Chromosome"/>
</dbReference>
<dbReference type="GO" id="GO:0030956">
    <property type="term" value="C:glutamyl-tRNA(Gln) amidotransferase complex"/>
    <property type="evidence" value="ECO:0007669"/>
    <property type="project" value="InterPro"/>
</dbReference>
<dbReference type="GO" id="GO:0005524">
    <property type="term" value="F:ATP binding"/>
    <property type="evidence" value="ECO:0007669"/>
    <property type="project" value="UniProtKB-KW"/>
</dbReference>
<dbReference type="GO" id="GO:0050567">
    <property type="term" value="F:glutaminyl-tRNA synthase (glutamine-hydrolyzing) activity"/>
    <property type="evidence" value="ECO:0007669"/>
    <property type="project" value="UniProtKB-UniRule"/>
</dbReference>
<dbReference type="GO" id="GO:0006412">
    <property type="term" value="P:translation"/>
    <property type="evidence" value="ECO:0007669"/>
    <property type="project" value="UniProtKB-UniRule"/>
</dbReference>
<dbReference type="Gene3D" id="3.90.1300.10">
    <property type="entry name" value="Amidase signature (AS) domain"/>
    <property type="match status" value="1"/>
</dbReference>
<dbReference type="HAMAP" id="MF_00120">
    <property type="entry name" value="GatA"/>
    <property type="match status" value="1"/>
</dbReference>
<dbReference type="InterPro" id="IPR000120">
    <property type="entry name" value="Amidase"/>
</dbReference>
<dbReference type="InterPro" id="IPR020556">
    <property type="entry name" value="Amidase_CS"/>
</dbReference>
<dbReference type="InterPro" id="IPR023631">
    <property type="entry name" value="Amidase_dom"/>
</dbReference>
<dbReference type="InterPro" id="IPR036928">
    <property type="entry name" value="AS_sf"/>
</dbReference>
<dbReference type="InterPro" id="IPR004412">
    <property type="entry name" value="GatA"/>
</dbReference>
<dbReference type="NCBIfam" id="TIGR00132">
    <property type="entry name" value="gatA"/>
    <property type="match status" value="1"/>
</dbReference>
<dbReference type="PANTHER" id="PTHR11895:SF151">
    <property type="entry name" value="GLUTAMYL-TRNA(GLN) AMIDOTRANSFERASE SUBUNIT A"/>
    <property type="match status" value="1"/>
</dbReference>
<dbReference type="PANTHER" id="PTHR11895">
    <property type="entry name" value="TRANSAMIDASE"/>
    <property type="match status" value="1"/>
</dbReference>
<dbReference type="Pfam" id="PF01425">
    <property type="entry name" value="Amidase"/>
    <property type="match status" value="1"/>
</dbReference>
<dbReference type="SUPFAM" id="SSF75304">
    <property type="entry name" value="Amidase signature (AS) enzymes"/>
    <property type="match status" value="1"/>
</dbReference>
<dbReference type="PROSITE" id="PS00571">
    <property type="entry name" value="AMIDASES"/>
    <property type="match status" value="1"/>
</dbReference>
<sequence>MSNETATLVKLSAAEQAAAVKKGDVTSRELVEAHLKVIEAAEPSIKAFLKVSGDVALEQADAFDAKSAEDKAALPELAGVPIAIKDMIVTKGIETTAASKILEGWVPPYDATVIEKLKAAGMPILGKTNLDEFAQGSSTEHSAYQTTHNPWDTERVPGGSGGGSASAVAAFEAPIALGTDTGGSIRQPGALTGTVGVKPTYGGVSRFGAIAMASSLDQIGPVSRTVLDSALLQEIIGGHDKRDSTSIPEGPRPMVAAAREGAKRDLKGMKVGLIKELGGDGFQPGVEARFNEAVDKLKEMGAEVVEVSVPHIGYSLGAYYIIMPSEVSSNLARYDGMRYGLRVMPPTGVPQTAANMMAYTREAGFGDEVKRRIILGTYALSAGYYDAWYGSAQKVRTLIIEDFKKAFEQVDVLVAPTSPSTAFKFGEKMDDPLAMYMNDIATIPANLAGVPAMSIPAGLSDDGLPVGFQFIAPQQRDEVMYKPAAALEAALEDSWNGPIWNDLKTPWLDGLGK</sequence>
<proteinExistence type="inferred from homology"/>
<keyword id="KW-0067">ATP-binding</keyword>
<keyword id="KW-0436">Ligase</keyword>
<keyword id="KW-0547">Nucleotide-binding</keyword>
<keyword id="KW-0648">Protein biosynthesis</keyword>
<keyword id="KW-1185">Reference proteome</keyword>
<gene>
    <name evidence="1" type="primary">gatA</name>
    <name type="ordered locus">BL0403</name>
</gene>